<evidence type="ECO:0000255" key="1">
    <source>
        <dbReference type="HAMAP-Rule" id="MF_00098"/>
    </source>
</evidence>
<name>SYM_BURP0</name>
<feature type="chain" id="PRO_0000331793" description="Methionine--tRNA ligase">
    <location>
        <begin position="1"/>
        <end position="725"/>
    </location>
</feature>
<feature type="domain" description="tRNA-binding" evidence="1">
    <location>
        <begin position="619"/>
        <end position="725"/>
    </location>
</feature>
<feature type="short sequence motif" description="'HIGH' region">
    <location>
        <begin position="27"/>
        <end position="37"/>
    </location>
</feature>
<feature type="short sequence motif" description="'KMSKS' region">
    <location>
        <begin position="348"/>
        <end position="352"/>
    </location>
</feature>
<feature type="binding site" evidence="1">
    <location>
        <position position="158"/>
    </location>
    <ligand>
        <name>Zn(2+)</name>
        <dbReference type="ChEBI" id="CHEBI:29105"/>
    </ligand>
</feature>
<feature type="binding site" evidence="1">
    <location>
        <position position="161"/>
    </location>
    <ligand>
        <name>Zn(2+)</name>
        <dbReference type="ChEBI" id="CHEBI:29105"/>
    </ligand>
</feature>
<feature type="binding site" evidence="1">
    <location>
        <position position="171"/>
    </location>
    <ligand>
        <name>Zn(2+)</name>
        <dbReference type="ChEBI" id="CHEBI:29105"/>
    </ligand>
</feature>
<feature type="binding site" evidence="1">
    <location>
        <position position="174"/>
    </location>
    <ligand>
        <name>Zn(2+)</name>
        <dbReference type="ChEBI" id="CHEBI:29105"/>
    </ligand>
</feature>
<feature type="binding site" evidence="1">
    <location>
        <position position="351"/>
    </location>
    <ligand>
        <name>ATP</name>
        <dbReference type="ChEBI" id="CHEBI:30616"/>
    </ligand>
</feature>
<reference key="1">
    <citation type="journal article" date="2010" name="Genome Biol. Evol.">
        <title>Continuing evolution of Burkholderia mallei through genome reduction and large-scale rearrangements.</title>
        <authorList>
            <person name="Losada L."/>
            <person name="Ronning C.M."/>
            <person name="DeShazer D."/>
            <person name="Woods D."/>
            <person name="Fedorova N."/>
            <person name="Kim H.S."/>
            <person name="Shabalina S.A."/>
            <person name="Pearson T.R."/>
            <person name="Brinkac L."/>
            <person name="Tan P."/>
            <person name="Nandi T."/>
            <person name="Crabtree J."/>
            <person name="Badger J."/>
            <person name="Beckstrom-Sternberg S."/>
            <person name="Saqib M."/>
            <person name="Schutzer S.E."/>
            <person name="Keim P."/>
            <person name="Nierman W.C."/>
        </authorList>
    </citation>
    <scope>NUCLEOTIDE SEQUENCE [LARGE SCALE GENOMIC DNA]</scope>
    <source>
        <strain>1106a</strain>
    </source>
</reference>
<comment type="function">
    <text evidence="1">Is required not only for elongation of protein synthesis but also for the initiation of all mRNA translation through initiator tRNA(fMet) aminoacylation.</text>
</comment>
<comment type="catalytic activity">
    <reaction evidence="1">
        <text>tRNA(Met) + L-methionine + ATP = L-methionyl-tRNA(Met) + AMP + diphosphate</text>
        <dbReference type="Rhea" id="RHEA:13481"/>
        <dbReference type="Rhea" id="RHEA-COMP:9667"/>
        <dbReference type="Rhea" id="RHEA-COMP:9698"/>
        <dbReference type="ChEBI" id="CHEBI:30616"/>
        <dbReference type="ChEBI" id="CHEBI:33019"/>
        <dbReference type="ChEBI" id="CHEBI:57844"/>
        <dbReference type="ChEBI" id="CHEBI:78442"/>
        <dbReference type="ChEBI" id="CHEBI:78530"/>
        <dbReference type="ChEBI" id="CHEBI:456215"/>
        <dbReference type="EC" id="6.1.1.10"/>
    </reaction>
</comment>
<comment type="cofactor">
    <cofactor evidence="1">
        <name>Zn(2+)</name>
        <dbReference type="ChEBI" id="CHEBI:29105"/>
    </cofactor>
    <text evidence="1">Binds 1 zinc ion per subunit.</text>
</comment>
<comment type="subunit">
    <text evidence="1">Homodimer.</text>
</comment>
<comment type="subcellular location">
    <subcellularLocation>
        <location evidence="1">Cytoplasm</location>
    </subcellularLocation>
</comment>
<comment type="similarity">
    <text evidence="1">Belongs to the class-I aminoacyl-tRNA synthetase family. MetG type 1 subfamily.</text>
</comment>
<keyword id="KW-0030">Aminoacyl-tRNA synthetase</keyword>
<keyword id="KW-0067">ATP-binding</keyword>
<keyword id="KW-0963">Cytoplasm</keyword>
<keyword id="KW-0436">Ligase</keyword>
<keyword id="KW-0479">Metal-binding</keyword>
<keyword id="KW-0547">Nucleotide-binding</keyword>
<keyword id="KW-0648">Protein biosynthesis</keyword>
<keyword id="KW-0694">RNA-binding</keyword>
<keyword id="KW-0820">tRNA-binding</keyword>
<keyword id="KW-0862">Zinc</keyword>
<proteinExistence type="inferred from homology"/>
<accession>A3NSL6</accession>
<protein>
    <recommendedName>
        <fullName evidence="1">Methionine--tRNA ligase</fullName>
        <ecNumber evidence="1">6.1.1.10</ecNumber>
    </recommendedName>
    <alternativeName>
        <fullName evidence="1">Methionyl-tRNA synthetase</fullName>
        <shortName evidence="1">MetRS</shortName>
    </alternativeName>
</protein>
<gene>
    <name evidence="1" type="primary">metG</name>
    <name type="ordered locus">BURPS1106A_1057</name>
</gene>
<organism>
    <name type="scientific">Burkholderia pseudomallei (strain 1106a)</name>
    <dbReference type="NCBI Taxonomy" id="357348"/>
    <lineage>
        <taxon>Bacteria</taxon>
        <taxon>Pseudomonadati</taxon>
        <taxon>Pseudomonadota</taxon>
        <taxon>Betaproteobacteria</taxon>
        <taxon>Burkholderiales</taxon>
        <taxon>Burkholderiaceae</taxon>
        <taxon>Burkholderia</taxon>
        <taxon>pseudomallei group</taxon>
    </lineage>
</organism>
<sequence>MSASDLTSVQAGAPQGRRQILVTSALPYANGQIHIGHLVEYIQTDIWVRTMRMHGHEIYYIGADDTHGTPVMLRAEQEGVSPKQLIERVWREHKRDFDSFGVSFDNFYTTDSDENRVLSETIYLALKEAGFIAEREIEQAYDPVRQMFLPDRFIKGECPKCHAKDQYGDSCEVCGTTYQPTDLIHPYSVVSGAAPVRKTSTHYFFRLSDPRCEAFLREWVSGLAQPEATNKMREWLGEAGEAKLADWDISRDAPYFGFEIPGAPGKYFYVWLDAPVGYYASFKNLCQRRGLDFDAWIRKDSTTEQYHFIGKDILYFHTLFWPAMLEFSGHRTPTNVFAHGFLTVDGAKMSKSRGTFITAQSYIDTGLNPEWLRYYFAAKLNATMEDIDLNLEDFQARVNSDLVGKYVNIASRAAGFLLKRFDGRVQASAMNHPLLATLRGAIPQIAAHYEAREYGRALRQTMELADAVNGYVDSAKPWELAKDPANAVALHETCSVSLEAFRLLSLALKPVLPRVAQGVEAFLGIAPLTWADAGMPLSPEQPVRAYQHLMTRVDPKQIDALLAANRGSLQGTAAAAEAGAANGNGAGSKNGKGAKAAAQPAASAANADDGASPIISIDDFAKIDLRIAKIVACQAVEGSDKLLQLTLDVGEERTRNVFSGIKSAYRPEQLVGKLTVMVANLAPRKMKFGLSEGMVLAASAADEKAEPGLYILEPHSGAKPGMRVK</sequence>
<dbReference type="EC" id="6.1.1.10" evidence="1"/>
<dbReference type="EMBL" id="CP000572">
    <property type="protein sequence ID" value="ABN91241.1"/>
    <property type="molecule type" value="Genomic_DNA"/>
</dbReference>
<dbReference type="RefSeq" id="WP_004538477.1">
    <property type="nucleotide sequence ID" value="NC_009076.1"/>
</dbReference>
<dbReference type="SMR" id="A3NSL6"/>
<dbReference type="KEGG" id="bpl:BURPS1106A_1057"/>
<dbReference type="HOGENOM" id="CLU_009710_7_0_4"/>
<dbReference type="Proteomes" id="UP000006738">
    <property type="component" value="Chromosome I"/>
</dbReference>
<dbReference type="GO" id="GO:0005829">
    <property type="term" value="C:cytosol"/>
    <property type="evidence" value="ECO:0007669"/>
    <property type="project" value="TreeGrafter"/>
</dbReference>
<dbReference type="GO" id="GO:0005524">
    <property type="term" value="F:ATP binding"/>
    <property type="evidence" value="ECO:0007669"/>
    <property type="project" value="UniProtKB-UniRule"/>
</dbReference>
<dbReference type="GO" id="GO:0046872">
    <property type="term" value="F:metal ion binding"/>
    <property type="evidence" value="ECO:0007669"/>
    <property type="project" value="UniProtKB-KW"/>
</dbReference>
<dbReference type="GO" id="GO:0004825">
    <property type="term" value="F:methionine-tRNA ligase activity"/>
    <property type="evidence" value="ECO:0007669"/>
    <property type="project" value="UniProtKB-UniRule"/>
</dbReference>
<dbReference type="GO" id="GO:0000049">
    <property type="term" value="F:tRNA binding"/>
    <property type="evidence" value="ECO:0007669"/>
    <property type="project" value="UniProtKB-KW"/>
</dbReference>
<dbReference type="GO" id="GO:0006431">
    <property type="term" value="P:methionyl-tRNA aminoacylation"/>
    <property type="evidence" value="ECO:0007669"/>
    <property type="project" value="UniProtKB-UniRule"/>
</dbReference>
<dbReference type="CDD" id="cd07957">
    <property type="entry name" value="Anticodon_Ia_Met"/>
    <property type="match status" value="1"/>
</dbReference>
<dbReference type="CDD" id="cd00814">
    <property type="entry name" value="MetRS_core"/>
    <property type="match status" value="1"/>
</dbReference>
<dbReference type="CDD" id="cd02800">
    <property type="entry name" value="tRNA_bind_EcMetRS_like"/>
    <property type="match status" value="1"/>
</dbReference>
<dbReference type="FunFam" id="2.20.28.20:FF:000001">
    <property type="entry name" value="Methionine--tRNA ligase"/>
    <property type="match status" value="1"/>
</dbReference>
<dbReference type="FunFam" id="2.40.50.140:FF:000042">
    <property type="entry name" value="Methionine--tRNA ligase"/>
    <property type="match status" value="1"/>
</dbReference>
<dbReference type="Gene3D" id="3.40.50.620">
    <property type="entry name" value="HUPs"/>
    <property type="match status" value="1"/>
</dbReference>
<dbReference type="Gene3D" id="1.10.730.10">
    <property type="entry name" value="Isoleucyl-tRNA Synthetase, Domain 1"/>
    <property type="match status" value="1"/>
</dbReference>
<dbReference type="Gene3D" id="2.20.28.20">
    <property type="entry name" value="Methionyl-tRNA synthetase, Zn-domain"/>
    <property type="match status" value="1"/>
</dbReference>
<dbReference type="Gene3D" id="2.40.50.140">
    <property type="entry name" value="Nucleic acid-binding proteins"/>
    <property type="match status" value="1"/>
</dbReference>
<dbReference type="HAMAP" id="MF_00098">
    <property type="entry name" value="Met_tRNA_synth_type1"/>
    <property type="match status" value="1"/>
</dbReference>
<dbReference type="InterPro" id="IPR001412">
    <property type="entry name" value="aa-tRNA-synth_I_CS"/>
</dbReference>
<dbReference type="InterPro" id="IPR041872">
    <property type="entry name" value="Anticodon_Met"/>
</dbReference>
<dbReference type="InterPro" id="IPR004495">
    <property type="entry name" value="Met-tRNA-synth_bsu_C"/>
</dbReference>
<dbReference type="InterPro" id="IPR023458">
    <property type="entry name" value="Met-tRNA_ligase_1"/>
</dbReference>
<dbReference type="InterPro" id="IPR014758">
    <property type="entry name" value="Met-tRNA_synth"/>
</dbReference>
<dbReference type="InterPro" id="IPR015413">
    <property type="entry name" value="Methionyl/Leucyl_tRNA_Synth"/>
</dbReference>
<dbReference type="InterPro" id="IPR033911">
    <property type="entry name" value="MetRS_core"/>
</dbReference>
<dbReference type="InterPro" id="IPR029038">
    <property type="entry name" value="MetRS_Zn"/>
</dbReference>
<dbReference type="InterPro" id="IPR012340">
    <property type="entry name" value="NA-bd_OB-fold"/>
</dbReference>
<dbReference type="InterPro" id="IPR014729">
    <property type="entry name" value="Rossmann-like_a/b/a_fold"/>
</dbReference>
<dbReference type="InterPro" id="IPR002547">
    <property type="entry name" value="tRNA-bd_dom"/>
</dbReference>
<dbReference type="InterPro" id="IPR009080">
    <property type="entry name" value="tRNAsynth_Ia_anticodon-bd"/>
</dbReference>
<dbReference type="NCBIfam" id="TIGR00398">
    <property type="entry name" value="metG"/>
    <property type="match status" value="1"/>
</dbReference>
<dbReference type="NCBIfam" id="TIGR00399">
    <property type="entry name" value="metG_C_term"/>
    <property type="match status" value="1"/>
</dbReference>
<dbReference type="NCBIfam" id="NF001100">
    <property type="entry name" value="PRK00133.1"/>
    <property type="match status" value="1"/>
</dbReference>
<dbReference type="PANTHER" id="PTHR45765">
    <property type="entry name" value="METHIONINE--TRNA LIGASE"/>
    <property type="match status" value="1"/>
</dbReference>
<dbReference type="PANTHER" id="PTHR45765:SF1">
    <property type="entry name" value="METHIONINE--TRNA LIGASE, CYTOPLASMIC"/>
    <property type="match status" value="1"/>
</dbReference>
<dbReference type="Pfam" id="PF09334">
    <property type="entry name" value="tRNA-synt_1g"/>
    <property type="match status" value="1"/>
</dbReference>
<dbReference type="Pfam" id="PF01588">
    <property type="entry name" value="tRNA_bind"/>
    <property type="match status" value="1"/>
</dbReference>
<dbReference type="PRINTS" id="PR01041">
    <property type="entry name" value="TRNASYNTHMET"/>
</dbReference>
<dbReference type="SUPFAM" id="SSF47323">
    <property type="entry name" value="Anticodon-binding domain of a subclass of class I aminoacyl-tRNA synthetases"/>
    <property type="match status" value="1"/>
</dbReference>
<dbReference type="SUPFAM" id="SSF57770">
    <property type="entry name" value="Methionyl-tRNA synthetase (MetRS), Zn-domain"/>
    <property type="match status" value="1"/>
</dbReference>
<dbReference type="SUPFAM" id="SSF50249">
    <property type="entry name" value="Nucleic acid-binding proteins"/>
    <property type="match status" value="1"/>
</dbReference>
<dbReference type="SUPFAM" id="SSF52374">
    <property type="entry name" value="Nucleotidylyl transferase"/>
    <property type="match status" value="1"/>
</dbReference>
<dbReference type="PROSITE" id="PS00178">
    <property type="entry name" value="AA_TRNA_LIGASE_I"/>
    <property type="match status" value="1"/>
</dbReference>
<dbReference type="PROSITE" id="PS50886">
    <property type="entry name" value="TRBD"/>
    <property type="match status" value="1"/>
</dbReference>